<accession>Q3MHH3</accession>
<comment type="subunit">
    <text evidence="1">Interacts with S100P.</text>
</comment>
<comment type="subcellular location">
    <subcellularLocation>
        <location evidence="1">Nucleus</location>
    </subcellularLocation>
    <text evidence="1">Colocalizes with S100P in the nucleus.</text>
</comment>
<evidence type="ECO:0000250" key="1">
    <source>
        <dbReference type="UniProtKB" id="Q96BU1"/>
    </source>
</evidence>
<evidence type="ECO:0000256" key="2">
    <source>
        <dbReference type="SAM" id="MobiDB-lite"/>
    </source>
</evidence>
<evidence type="ECO:0000312" key="3">
    <source>
        <dbReference type="EMBL" id="AAI05239.1"/>
    </source>
</evidence>
<proteinExistence type="evidence at transcript level"/>
<reference evidence="3" key="1">
    <citation type="submission" date="2005-09" db="EMBL/GenBank/DDBJ databases">
        <authorList>
            <consortium name="NIH - Mammalian Gene Collection (MGC) project"/>
        </authorList>
    </citation>
    <scope>NUCLEOTIDE SEQUENCE [LARGE SCALE MRNA]</scope>
    <source>
        <strain evidence="3">Hereford</strain>
        <tissue evidence="3">Thymus</tissue>
    </source>
</reference>
<name>S1PBP_BOVIN</name>
<gene>
    <name evidence="1" type="primary">S100PBP</name>
</gene>
<sequence length="422" mass="47176">MMCSLVPSEQSSGTSLLPKDNAPFSWSSLDEDELDDSLLELSDGEDDGHFSFTEEQIQELLKDDDLSNEHFPWGGGLPSDDSRNVEKGEKGSQIPLDTPQEKDSPYNMGPEAETPDTFKLPQLTTSVGHGPTPAKSLNRRFALEKNLIKVTVAPFDPTVCDVALDKDKTYVSEVTSRVTEKPSSLGEEMREDDLSPNESTLCTESEGISPDNSASDGPPLPSSNSNFQHTVSDKNMSDSKKATPVFSQILDHSETPNTGSSRRNGSYKSSFEMKLPVSSSSSKDVLDKDSGKLKVHEKRLGKVIPVLQAKTRTNVPTFSPSDLEKQKQSYLRNVIAHIEDPVDSNQGTLGELCALMDQVHHMHNQKWQHPSDLTRRNYARFRQKSLQRYSLTQWVDRNKRSHHRFQRLPDFPYGPFVSSHQQ</sequence>
<dbReference type="EMBL" id="BC105238">
    <property type="protein sequence ID" value="AAI05239.1"/>
    <property type="molecule type" value="mRNA"/>
</dbReference>
<dbReference type="RefSeq" id="NP_001029859.1">
    <property type="nucleotide sequence ID" value="NM_001034687.2"/>
</dbReference>
<dbReference type="RefSeq" id="XP_015315139.1">
    <property type="nucleotide sequence ID" value="XM_015459653.1"/>
</dbReference>
<dbReference type="FunCoup" id="Q3MHH3">
    <property type="interactions" value="2576"/>
</dbReference>
<dbReference type="STRING" id="9913.ENSBTAP00000024053"/>
<dbReference type="PaxDb" id="9913-ENSBTAP00000024053"/>
<dbReference type="GeneID" id="539983"/>
<dbReference type="KEGG" id="bta:539983"/>
<dbReference type="CTD" id="64766"/>
<dbReference type="VEuPathDB" id="HostDB:ENSBTAG00000018067"/>
<dbReference type="eggNOG" id="ENOG502S5YT">
    <property type="taxonomic scope" value="Eukaryota"/>
</dbReference>
<dbReference type="HOGENOM" id="CLU_064425_0_0_1"/>
<dbReference type="InParanoid" id="Q3MHH3"/>
<dbReference type="OMA" id="HHMQNSK"/>
<dbReference type="OrthoDB" id="8945510at2759"/>
<dbReference type="TreeFam" id="TF337946"/>
<dbReference type="Proteomes" id="UP000009136">
    <property type="component" value="Chromosome 2"/>
</dbReference>
<dbReference type="Bgee" id="ENSBTAG00000018067">
    <property type="expression patterns" value="Expressed in spermatocyte and 105 other cell types or tissues"/>
</dbReference>
<dbReference type="GO" id="GO:0005829">
    <property type="term" value="C:cytosol"/>
    <property type="evidence" value="ECO:0000318"/>
    <property type="project" value="GO_Central"/>
</dbReference>
<dbReference type="GO" id="GO:0005634">
    <property type="term" value="C:nucleus"/>
    <property type="evidence" value="ECO:0000318"/>
    <property type="project" value="GO_Central"/>
</dbReference>
<dbReference type="GO" id="GO:0048306">
    <property type="term" value="F:calcium-dependent protein binding"/>
    <property type="evidence" value="ECO:0000318"/>
    <property type="project" value="GO_Central"/>
</dbReference>
<dbReference type="InterPro" id="IPR026097">
    <property type="entry name" value="S100PBP"/>
</dbReference>
<dbReference type="PANTHER" id="PTHR14455">
    <property type="entry name" value="ASKOPOS"/>
    <property type="match status" value="1"/>
</dbReference>
<dbReference type="PANTHER" id="PTHR14455:SF0">
    <property type="entry name" value="S100P-BINDING PROTEIN"/>
    <property type="match status" value="1"/>
</dbReference>
<dbReference type="Pfam" id="PF15427">
    <property type="entry name" value="S100PBPR"/>
    <property type="match status" value="1"/>
</dbReference>
<feature type="chain" id="PRO_0000317050" description="S100P-binding protein">
    <location>
        <begin position="1"/>
        <end position="422"/>
    </location>
</feature>
<feature type="region of interest" description="Disordered" evidence="2">
    <location>
        <begin position="1"/>
        <end position="28"/>
    </location>
</feature>
<feature type="region of interest" description="Disordered" evidence="2">
    <location>
        <begin position="61"/>
        <end position="135"/>
    </location>
</feature>
<feature type="region of interest" description="Disordered" evidence="2">
    <location>
        <begin position="170"/>
        <end position="292"/>
    </location>
</feature>
<feature type="compositionally biased region" description="Basic and acidic residues" evidence="2">
    <location>
        <begin position="80"/>
        <end position="90"/>
    </location>
</feature>
<feature type="compositionally biased region" description="Basic and acidic residues" evidence="2">
    <location>
        <begin position="231"/>
        <end position="241"/>
    </location>
</feature>
<feature type="compositionally biased region" description="Polar residues" evidence="2">
    <location>
        <begin position="255"/>
        <end position="269"/>
    </location>
</feature>
<feature type="compositionally biased region" description="Low complexity" evidence="2">
    <location>
        <begin position="274"/>
        <end position="283"/>
    </location>
</feature>
<feature type="modified residue" description="Phosphoserine" evidence="1">
    <location>
        <position position="195"/>
    </location>
</feature>
<organism>
    <name type="scientific">Bos taurus</name>
    <name type="common">Bovine</name>
    <dbReference type="NCBI Taxonomy" id="9913"/>
    <lineage>
        <taxon>Eukaryota</taxon>
        <taxon>Metazoa</taxon>
        <taxon>Chordata</taxon>
        <taxon>Craniata</taxon>
        <taxon>Vertebrata</taxon>
        <taxon>Euteleostomi</taxon>
        <taxon>Mammalia</taxon>
        <taxon>Eutheria</taxon>
        <taxon>Laurasiatheria</taxon>
        <taxon>Artiodactyla</taxon>
        <taxon>Ruminantia</taxon>
        <taxon>Pecora</taxon>
        <taxon>Bovidae</taxon>
        <taxon>Bovinae</taxon>
        <taxon>Bos</taxon>
    </lineage>
</organism>
<keyword id="KW-0539">Nucleus</keyword>
<keyword id="KW-0597">Phosphoprotein</keyword>
<keyword id="KW-1185">Reference proteome</keyword>
<protein>
    <recommendedName>
        <fullName>S100P-binding protein</fullName>
    </recommendedName>
</protein>